<protein>
    <recommendedName>
        <fullName evidence="1">Adenine deaminase</fullName>
        <shortName evidence="1">Adenase</shortName>
        <shortName evidence="1">Adenine aminase</shortName>
        <ecNumber evidence="1">3.5.4.2</ecNumber>
    </recommendedName>
</protein>
<organism>
    <name type="scientific">Shigella flexneri serotype 5b (strain 8401)</name>
    <dbReference type="NCBI Taxonomy" id="373384"/>
    <lineage>
        <taxon>Bacteria</taxon>
        <taxon>Pseudomonadati</taxon>
        <taxon>Pseudomonadota</taxon>
        <taxon>Gammaproteobacteria</taxon>
        <taxon>Enterobacterales</taxon>
        <taxon>Enterobacteriaceae</taxon>
        <taxon>Shigella</taxon>
    </lineage>
</organism>
<name>ADEC_SHIF8</name>
<feature type="chain" id="PRO_0000296733" description="Adenine deaminase">
    <location>
        <begin position="1"/>
        <end position="588"/>
    </location>
</feature>
<evidence type="ECO:0000255" key="1">
    <source>
        <dbReference type="HAMAP-Rule" id="MF_01518"/>
    </source>
</evidence>
<dbReference type="EC" id="3.5.4.2" evidence="1"/>
<dbReference type="EMBL" id="CP000266">
    <property type="protein sequence ID" value="ABF05854.1"/>
    <property type="molecule type" value="Genomic_DNA"/>
</dbReference>
<dbReference type="SMR" id="Q0SYL1"/>
<dbReference type="KEGG" id="sfv:SFV_3844"/>
<dbReference type="HOGENOM" id="CLU_027935_0_0_6"/>
<dbReference type="Proteomes" id="UP000000659">
    <property type="component" value="Chromosome"/>
</dbReference>
<dbReference type="GO" id="GO:0000034">
    <property type="term" value="F:adenine deaminase activity"/>
    <property type="evidence" value="ECO:0007669"/>
    <property type="project" value="UniProtKB-UniRule"/>
</dbReference>
<dbReference type="GO" id="GO:0006146">
    <property type="term" value="P:adenine catabolic process"/>
    <property type="evidence" value="ECO:0007669"/>
    <property type="project" value="InterPro"/>
</dbReference>
<dbReference type="CDD" id="cd01295">
    <property type="entry name" value="AdeC"/>
    <property type="match status" value="1"/>
</dbReference>
<dbReference type="FunFam" id="3.20.20.140:FF:000016">
    <property type="entry name" value="Adenine deaminase"/>
    <property type="match status" value="1"/>
</dbReference>
<dbReference type="Gene3D" id="3.20.20.140">
    <property type="entry name" value="Metal-dependent hydrolases"/>
    <property type="match status" value="1"/>
</dbReference>
<dbReference type="Gene3D" id="2.30.40.10">
    <property type="entry name" value="Urease, subunit C, domain 1"/>
    <property type="match status" value="1"/>
</dbReference>
<dbReference type="HAMAP" id="MF_01518">
    <property type="entry name" value="Adenine_deamin"/>
    <property type="match status" value="1"/>
</dbReference>
<dbReference type="InterPro" id="IPR006679">
    <property type="entry name" value="Adenine_deam"/>
</dbReference>
<dbReference type="InterPro" id="IPR026912">
    <property type="entry name" value="Adenine_deam_C"/>
</dbReference>
<dbReference type="InterPro" id="IPR006680">
    <property type="entry name" value="Amidohydro-rel"/>
</dbReference>
<dbReference type="InterPro" id="IPR011059">
    <property type="entry name" value="Metal-dep_hydrolase_composite"/>
</dbReference>
<dbReference type="InterPro" id="IPR032466">
    <property type="entry name" value="Metal_Hydrolase"/>
</dbReference>
<dbReference type="NCBIfam" id="TIGR01178">
    <property type="entry name" value="ade"/>
    <property type="match status" value="1"/>
</dbReference>
<dbReference type="NCBIfam" id="NF007457">
    <property type="entry name" value="PRK10027.1"/>
    <property type="match status" value="1"/>
</dbReference>
<dbReference type="PANTHER" id="PTHR11113:SF2">
    <property type="entry name" value="ADENINE DEAMINASE"/>
    <property type="match status" value="1"/>
</dbReference>
<dbReference type="PANTHER" id="PTHR11113">
    <property type="entry name" value="N-ACETYLGLUCOSAMINE-6-PHOSPHATE DEACETYLASE"/>
    <property type="match status" value="1"/>
</dbReference>
<dbReference type="Pfam" id="PF13382">
    <property type="entry name" value="Adenine_deam_C"/>
    <property type="match status" value="1"/>
</dbReference>
<dbReference type="Pfam" id="PF01979">
    <property type="entry name" value="Amidohydro_1"/>
    <property type="match status" value="1"/>
</dbReference>
<dbReference type="SUPFAM" id="SSF51338">
    <property type="entry name" value="Composite domain of metallo-dependent hydrolases"/>
    <property type="match status" value="1"/>
</dbReference>
<dbReference type="SUPFAM" id="SSF51556">
    <property type="entry name" value="Metallo-dependent hydrolases"/>
    <property type="match status" value="1"/>
</dbReference>
<keyword id="KW-0378">Hydrolase</keyword>
<keyword id="KW-0464">Manganese</keyword>
<reference key="1">
    <citation type="journal article" date="2006" name="BMC Genomics">
        <title>Complete genome sequence of Shigella flexneri 5b and comparison with Shigella flexneri 2a.</title>
        <authorList>
            <person name="Nie H."/>
            <person name="Yang F."/>
            <person name="Zhang X."/>
            <person name="Yang J."/>
            <person name="Chen L."/>
            <person name="Wang J."/>
            <person name="Xiong Z."/>
            <person name="Peng J."/>
            <person name="Sun L."/>
            <person name="Dong J."/>
            <person name="Xue Y."/>
            <person name="Xu X."/>
            <person name="Chen S."/>
            <person name="Yao Z."/>
            <person name="Shen Y."/>
            <person name="Jin Q."/>
        </authorList>
    </citation>
    <scope>NUCLEOTIDE SEQUENCE [LARGE SCALE GENOMIC DNA]</scope>
    <source>
        <strain>8401</strain>
    </source>
</reference>
<accession>Q0SYL1</accession>
<comment type="catalytic activity">
    <reaction evidence="1">
        <text>adenine + H2O + H(+) = hypoxanthine + NH4(+)</text>
        <dbReference type="Rhea" id="RHEA:23688"/>
        <dbReference type="ChEBI" id="CHEBI:15377"/>
        <dbReference type="ChEBI" id="CHEBI:15378"/>
        <dbReference type="ChEBI" id="CHEBI:16708"/>
        <dbReference type="ChEBI" id="CHEBI:17368"/>
        <dbReference type="ChEBI" id="CHEBI:28938"/>
        <dbReference type="EC" id="3.5.4.2"/>
    </reaction>
</comment>
<comment type="cofactor">
    <cofactor evidence="1">
        <name>Mn(2+)</name>
        <dbReference type="ChEBI" id="CHEBI:29035"/>
    </cofactor>
</comment>
<comment type="subunit">
    <text evidence="1">Homodimer.</text>
</comment>
<comment type="similarity">
    <text evidence="1">Belongs to the metallo-dependent hydrolases superfamily. Adenine deaminase family.</text>
</comment>
<proteinExistence type="inferred from homology"/>
<sequence length="588" mass="63827">MNNSINHKFHHISRAEYQELLAVSRGDAVADYIIDNVSILDLINAGEISGPIVIKGRYIAGVGAEYADTPALQRIDARGATAVPGFIDAHLHIESSMMTPVTFETATLPRGLTTVICDPHEIVNVMGEAGFAWFARCAEQARQNQYLQVSSCVPALEGCDVNGASFTLEQMLAWRDHPQVTGLAEMMDYPGVINGQNALLDKLDAFRYLTLDGHCPGLGGKELNAYIAAGIENCHESYQLEEGRRKLQLGMSLMIREGSAASNLNALAPLINEFNSPQCMLCTDDRNPWEIAHEGHIDALIRRLIEQHNVPLHVAYRVASWSTARHFGLNHLGLLAPGKQADIVLLSDARKVTVQQVLVKGEPIDAQTLQAEESARLALSAPPYGNTIARQPVSASDFALQFTPGKRYRVIDVIHNELITHSRSSVYSENGFDRDDVCFIAVLERYRQRLAPACGLLGGFGLNEGALAATVSHDSHNIVVIGRSAEEMALAVNQVIQDGGGLCVVRNGQVQSHLPLPIAGLMSTDTAQSLAEQIDALKAAARECGPLPDEPFIQMAFLSLPVIPALKLTSQGLFDGEKFAFTTLEVTE</sequence>
<gene>
    <name evidence="1" type="primary">ade</name>
    <name type="ordered locus">SFV_3844</name>
</gene>